<keyword id="KW-0963">Cytoplasm</keyword>
<keyword id="KW-0648">Protein biosynthesis</keyword>
<dbReference type="EMBL" id="BX936398">
    <property type="protein sequence ID" value="CAH22238.1"/>
    <property type="molecule type" value="Genomic_DNA"/>
</dbReference>
<dbReference type="RefSeq" id="WP_002212134.1">
    <property type="nucleotide sequence ID" value="NZ_CP009712.1"/>
</dbReference>
<dbReference type="SMR" id="Q667J2"/>
<dbReference type="GeneID" id="57977514"/>
<dbReference type="KEGG" id="ypo:BZ17_3621"/>
<dbReference type="KEGG" id="yps:YPTB3000"/>
<dbReference type="PATRIC" id="fig|273123.14.peg.3801"/>
<dbReference type="Proteomes" id="UP000001011">
    <property type="component" value="Chromosome"/>
</dbReference>
<dbReference type="GO" id="GO:0005829">
    <property type="term" value="C:cytosol"/>
    <property type="evidence" value="ECO:0007669"/>
    <property type="project" value="GOC"/>
</dbReference>
<dbReference type="GO" id="GO:0043023">
    <property type="term" value="F:ribosomal large subunit binding"/>
    <property type="evidence" value="ECO:0007669"/>
    <property type="project" value="TreeGrafter"/>
</dbReference>
<dbReference type="GO" id="GO:0002184">
    <property type="term" value="P:cytoplasmic translational termination"/>
    <property type="evidence" value="ECO:0007669"/>
    <property type="project" value="TreeGrafter"/>
</dbReference>
<dbReference type="CDD" id="cd00520">
    <property type="entry name" value="RRF"/>
    <property type="match status" value="1"/>
</dbReference>
<dbReference type="FunFam" id="1.10.132.20:FF:000001">
    <property type="entry name" value="Ribosome-recycling factor"/>
    <property type="match status" value="1"/>
</dbReference>
<dbReference type="FunFam" id="3.30.1360.40:FF:000001">
    <property type="entry name" value="Ribosome-recycling factor"/>
    <property type="match status" value="1"/>
</dbReference>
<dbReference type="Gene3D" id="3.30.1360.40">
    <property type="match status" value="1"/>
</dbReference>
<dbReference type="Gene3D" id="1.10.132.20">
    <property type="entry name" value="Ribosome-recycling factor"/>
    <property type="match status" value="1"/>
</dbReference>
<dbReference type="HAMAP" id="MF_00040">
    <property type="entry name" value="RRF"/>
    <property type="match status" value="1"/>
</dbReference>
<dbReference type="InterPro" id="IPR002661">
    <property type="entry name" value="Ribosome_recyc_fac"/>
</dbReference>
<dbReference type="InterPro" id="IPR023584">
    <property type="entry name" value="Ribosome_recyc_fac_dom"/>
</dbReference>
<dbReference type="InterPro" id="IPR036191">
    <property type="entry name" value="RRF_sf"/>
</dbReference>
<dbReference type="NCBIfam" id="TIGR00496">
    <property type="entry name" value="frr"/>
    <property type="match status" value="1"/>
</dbReference>
<dbReference type="PANTHER" id="PTHR20982:SF3">
    <property type="entry name" value="MITOCHONDRIAL RIBOSOME RECYCLING FACTOR PSEUDO 1"/>
    <property type="match status" value="1"/>
</dbReference>
<dbReference type="PANTHER" id="PTHR20982">
    <property type="entry name" value="RIBOSOME RECYCLING FACTOR"/>
    <property type="match status" value="1"/>
</dbReference>
<dbReference type="Pfam" id="PF01765">
    <property type="entry name" value="RRF"/>
    <property type="match status" value="1"/>
</dbReference>
<dbReference type="SUPFAM" id="SSF55194">
    <property type="entry name" value="Ribosome recycling factor, RRF"/>
    <property type="match status" value="1"/>
</dbReference>
<feature type="chain" id="PRO_0000167588" description="Ribosome-recycling factor">
    <location>
        <begin position="1"/>
        <end position="185"/>
    </location>
</feature>
<sequence length="185" mass="20710">MINEIRKDAEVRMEKCLEAFQNHISKIRTGRASPSILDGIQVEYYGTATPLRQLANIVVEDSRTLALTVFDRSLSAAVEKAIMTSDLGLNPSSAGTVIRVPLPALTEERRKDLIKVVRAEAEQGRVSIRNVRRDANDKVKALLKDKEISEDEDRRSQDDVQKLTDAYIKKVDAALAVKEAELMDF</sequence>
<gene>
    <name evidence="1" type="primary">frr</name>
    <name type="ordered locus">YPTB3000</name>
</gene>
<protein>
    <recommendedName>
        <fullName evidence="1">Ribosome-recycling factor</fullName>
        <shortName evidence="1">RRF</shortName>
    </recommendedName>
    <alternativeName>
        <fullName evidence="1">Ribosome-releasing factor</fullName>
    </alternativeName>
</protein>
<evidence type="ECO:0000255" key="1">
    <source>
        <dbReference type="HAMAP-Rule" id="MF_00040"/>
    </source>
</evidence>
<comment type="function">
    <text evidence="1">Responsible for the release of ribosomes from messenger RNA at the termination of protein biosynthesis. May increase the efficiency of translation by recycling ribosomes from one round of translation to another.</text>
</comment>
<comment type="subcellular location">
    <subcellularLocation>
        <location evidence="1">Cytoplasm</location>
    </subcellularLocation>
</comment>
<comment type="similarity">
    <text evidence="1">Belongs to the RRF family.</text>
</comment>
<reference key="1">
    <citation type="journal article" date="2004" name="Proc. Natl. Acad. Sci. U.S.A.">
        <title>Insights into the evolution of Yersinia pestis through whole-genome comparison with Yersinia pseudotuberculosis.</title>
        <authorList>
            <person name="Chain P.S.G."/>
            <person name="Carniel E."/>
            <person name="Larimer F.W."/>
            <person name="Lamerdin J."/>
            <person name="Stoutland P.O."/>
            <person name="Regala W.M."/>
            <person name="Georgescu A.M."/>
            <person name="Vergez L.M."/>
            <person name="Land M.L."/>
            <person name="Motin V.L."/>
            <person name="Brubaker R.R."/>
            <person name="Fowler J."/>
            <person name="Hinnebusch J."/>
            <person name="Marceau M."/>
            <person name="Medigue C."/>
            <person name="Simonet M."/>
            <person name="Chenal-Francisque V."/>
            <person name="Souza B."/>
            <person name="Dacheux D."/>
            <person name="Elliott J.M."/>
            <person name="Derbise A."/>
            <person name="Hauser L.J."/>
            <person name="Garcia E."/>
        </authorList>
    </citation>
    <scope>NUCLEOTIDE SEQUENCE [LARGE SCALE GENOMIC DNA]</scope>
    <source>
        <strain>IP32953</strain>
    </source>
</reference>
<name>RRF_YERPS</name>
<organism>
    <name type="scientific">Yersinia pseudotuberculosis serotype I (strain IP32953)</name>
    <dbReference type="NCBI Taxonomy" id="273123"/>
    <lineage>
        <taxon>Bacteria</taxon>
        <taxon>Pseudomonadati</taxon>
        <taxon>Pseudomonadota</taxon>
        <taxon>Gammaproteobacteria</taxon>
        <taxon>Enterobacterales</taxon>
        <taxon>Yersiniaceae</taxon>
        <taxon>Yersinia</taxon>
    </lineage>
</organism>
<accession>Q667J2</accession>
<proteinExistence type="inferred from homology"/>